<dbReference type="EMBL" id="M67479">
    <property type="protein sequence ID" value="AAA50477.1"/>
    <property type="molecule type" value="Genomic_DNA"/>
</dbReference>
<dbReference type="EMBL" id="Z73131">
    <property type="protein sequence ID" value="CAA97475.1"/>
    <property type="molecule type" value="Genomic_DNA"/>
</dbReference>
<dbReference type="EMBL" id="Z73130">
    <property type="protein sequence ID" value="CAA97474.1"/>
    <property type="molecule type" value="Genomic_DNA"/>
</dbReference>
<dbReference type="EMBL" id="AY693002">
    <property type="protein sequence ID" value="AAT93021.1"/>
    <property type="molecule type" value="Genomic_DNA"/>
</dbReference>
<dbReference type="EMBL" id="X97560">
    <property type="protein sequence ID" value="CAA66164.1"/>
    <property type="molecule type" value="Genomic_DNA"/>
</dbReference>
<dbReference type="EMBL" id="BK006945">
    <property type="protein sequence ID" value="DAA09294.1"/>
    <property type="molecule type" value="Genomic_DNA"/>
</dbReference>
<dbReference type="PIR" id="S61476">
    <property type="entry name" value="S61476"/>
</dbReference>
<dbReference type="RefSeq" id="NP_013074.1">
    <property type="nucleotide sequence ID" value="NM_001181846.1"/>
</dbReference>
<dbReference type="PDB" id="5KNE">
    <property type="method" value="EM"/>
    <property type="resolution" value="5.64 A"/>
    <property type="chains" value="A/B/C/D/E/F=6-857"/>
</dbReference>
<dbReference type="PDB" id="5U2U">
    <property type="method" value="X-ray"/>
    <property type="resolution" value="2.54 A"/>
    <property type="chains" value="A/B/C=1-166"/>
</dbReference>
<dbReference type="PDB" id="5VJH">
    <property type="method" value="EM"/>
    <property type="resolution" value="4.00 A"/>
    <property type="chains" value="A/B/C/D/E/F=1-908"/>
</dbReference>
<dbReference type="PDB" id="5VY8">
    <property type="method" value="EM"/>
    <property type="resolution" value="4.00 A"/>
    <property type="chains" value="A/B/C/D/E/F=1-908"/>
</dbReference>
<dbReference type="PDB" id="5VY9">
    <property type="method" value="EM"/>
    <property type="resolution" value="4.00 A"/>
    <property type="chains" value="A/B/C/D/E/F=1-908"/>
</dbReference>
<dbReference type="PDB" id="5VYA">
    <property type="method" value="EM"/>
    <property type="resolution" value="4.00 A"/>
    <property type="chains" value="A/B/C/D/E/F=1-908"/>
</dbReference>
<dbReference type="PDB" id="5WBW">
    <property type="method" value="X-ray"/>
    <property type="resolution" value="2.60 A"/>
    <property type="chains" value="A/B/D=4-356"/>
</dbReference>
<dbReference type="PDB" id="6AHF">
    <property type="method" value="EM"/>
    <property type="resolution" value="6.78 A"/>
    <property type="chains" value="A/B/C/D/E/F=1-908"/>
</dbReference>
<dbReference type="PDB" id="6AMN">
    <property type="method" value="X-ray"/>
    <property type="resolution" value="2.82 A"/>
    <property type="chains" value="A=4-352"/>
</dbReference>
<dbReference type="PDB" id="6N8T">
    <property type="method" value="EM"/>
    <property type="resolution" value="7.70 A"/>
    <property type="chains" value="A/B/C/D/E/F=6-884"/>
</dbReference>
<dbReference type="PDB" id="6N8V">
    <property type="method" value="EM"/>
    <property type="resolution" value="5.64 A"/>
    <property type="chains" value="A/B/C/D/E/F=6-884"/>
</dbReference>
<dbReference type="PDB" id="6N8Z">
    <property type="method" value="EM"/>
    <property type="resolution" value="9.30 A"/>
    <property type="chains" value="A/B/C/D/E/F=6-884"/>
</dbReference>
<dbReference type="PDBsum" id="5KNE"/>
<dbReference type="PDBsum" id="5U2U"/>
<dbReference type="PDBsum" id="5VJH"/>
<dbReference type="PDBsum" id="5VY8"/>
<dbReference type="PDBsum" id="5VY9"/>
<dbReference type="PDBsum" id="5VYA"/>
<dbReference type="PDBsum" id="5WBW"/>
<dbReference type="PDBsum" id="6AHF"/>
<dbReference type="PDBsum" id="6AMN"/>
<dbReference type="PDBsum" id="6N8T"/>
<dbReference type="PDBsum" id="6N8V"/>
<dbReference type="PDBsum" id="6N8Z"/>
<dbReference type="EMDB" id="EMD-0375"/>
<dbReference type="EMDB" id="EMD-0376"/>
<dbReference type="EMDB" id="EMD-0377"/>
<dbReference type="EMDB" id="EMD-8267"/>
<dbReference type="EMDB" id="EMD-8697"/>
<dbReference type="EMDB" id="EMD-8744"/>
<dbReference type="EMDB" id="EMD-8745"/>
<dbReference type="EMDB" id="EMD-8746"/>
<dbReference type="EMDB" id="EMD-9625"/>
<dbReference type="SMR" id="P31539"/>
<dbReference type="BioGRID" id="31226">
    <property type="interactions" value="708"/>
</dbReference>
<dbReference type="ComplexPortal" id="CPX-1861">
    <property type="entry name" value="GET4-GET5 transmembrane domain recognition complex"/>
</dbReference>
<dbReference type="DIP" id="DIP-2252N"/>
<dbReference type="FunCoup" id="P31539">
    <property type="interactions" value="655"/>
</dbReference>
<dbReference type="IntAct" id="P31539">
    <property type="interactions" value="53"/>
</dbReference>
<dbReference type="MINT" id="P31539"/>
<dbReference type="STRING" id="4932.YLL026W"/>
<dbReference type="CarbonylDB" id="P31539"/>
<dbReference type="GlyGen" id="P31539">
    <property type="glycosylation" value="2 sites, 1 O-linked glycan (2 sites)"/>
</dbReference>
<dbReference type="iPTMnet" id="P31539"/>
<dbReference type="PaxDb" id="4932-YLL026W"/>
<dbReference type="PeptideAtlas" id="P31539"/>
<dbReference type="EnsemblFungi" id="YLL026W_mRNA">
    <property type="protein sequence ID" value="YLL026W"/>
    <property type="gene ID" value="YLL026W"/>
</dbReference>
<dbReference type="GeneID" id="850633"/>
<dbReference type="KEGG" id="sce:YLL026W"/>
<dbReference type="AGR" id="SGD:S000003949"/>
<dbReference type="SGD" id="S000003949">
    <property type="gene designation" value="HSP104"/>
</dbReference>
<dbReference type="VEuPathDB" id="FungiDB:YLL026W"/>
<dbReference type="eggNOG" id="KOG1051">
    <property type="taxonomic scope" value="Eukaryota"/>
</dbReference>
<dbReference type="HOGENOM" id="CLU_005070_4_0_1"/>
<dbReference type="InParanoid" id="P31539"/>
<dbReference type="OMA" id="ERMKAVM"/>
<dbReference type="OrthoDB" id="47330at2759"/>
<dbReference type="BioCyc" id="YEAST:G3O-32130-MONOMER"/>
<dbReference type="SABIO-RK" id="P31539"/>
<dbReference type="BioGRID-ORCS" id="850633">
    <property type="hits" value="0 hits in 10 CRISPR screens"/>
</dbReference>
<dbReference type="CD-CODE" id="67785C55">
    <property type="entry name" value="Hypersomatic shock foci"/>
</dbReference>
<dbReference type="CD-CODE" id="9B47C524">
    <property type="entry name" value="Peri-nucleolar condensate"/>
</dbReference>
<dbReference type="CD-CODE" id="BA10A4D8">
    <property type="entry name" value="Htt inclusion"/>
</dbReference>
<dbReference type="CD-CODE" id="E03F929F">
    <property type="entry name" value="Stress granule"/>
</dbReference>
<dbReference type="PRO" id="PR:P31539"/>
<dbReference type="Proteomes" id="UP000002311">
    <property type="component" value="Chromosome XII"/>
</dbReference>
<dbReference type="RNAct" id="P31539">
    <property type="molecule type" value="protein"/>
</dbReference>
<dbReference type="GO" id="GO:0005737">
    <property type="term" value="C:cytoplasm"/>
    <property type="evidence" value="ECO:0000314"/>
    <property type="project" value="SGD"/>
</dbReference>
<dbReference type="GO" id="GO:0005829">
    <property type="term" value="C:cytosol"/>
    <property type="evidence" value="ECO:0000318"/>
    <property type="project" value="GO_Central"/>
</dbReference>
<dbReference type="GO" id="GO:0034399">
    <property type="term" value="C:nuclear periphery"/>
    <property type="evidence" value="ECO:0000314"/>
    <property type="project" value="SGD"/>
</dbReference>
<dbReference type="GO" id="GO:0005634">
    <property type="term" value="C:nucleus"/>
    <property type="evidence" value="ECO:0000314"/>
    <property type="project" value="SGD"/>
</dbReference>
<dbReference type="GO" id="GO:0072380">
    <property type="term" value="C:TRC complex"/>
    <property type="evidence" value="ECO:0000314"/>
    <property type="project" value="SGD"/>
</dbReference>
<dbReference type="GO" id="GO:0043531">
    <property type="term" value="F:ADP binding"/>
    <property type="evidence" value="ECO:0000315"/>
    <property type="project" value="SGD"/>
</dbReference>
<dbReference type="GO" id="GO:0005524">
    <property type="term" value="F:ATP binding"/>
    <property type="evidence" value="ECO:0000315"/>
    <property type="project" value="SGD"/>
</dbReference>
<dbReference type="GO" id="GO:0016887">
    <property type="term" value="F:ATP hydrolysis activity"/>
    <property type="evidence" value="ECO:0000314"/>
    <property type="project" value="SGD"/>
</dbReference>
<dbReference type="GO" id="GO:0042802">
    <property type="term" value="F:identical protein binding"/>
    <property type="evidence" value="ECO:0000353"/>
    <property type="project" value="IntAct"/>
</dbReference>
<dbReference type="GO" id="GO:0051087">
    <property type="term" value="F:protein-folding chaperone binding"/>
    <property type="evidence" value="ECO:0000314"/>
    <property type="project" value="SGD"/>
</dbReference>
<dbReference type="GO" id="GO:0051082">
    <property type="term" value="F:unfolded protein binding"/>
    <property type="evidence" value="ECO:0000314"/>
    <property type="project" value="SGD"/>
</dbReference>
<dbReference type="GO" id="GO:0070370">
    <property type="term" value="P:cellular heat acclimation"/>
    <property type="evidence" value="ECO:0000315"/>
    <property type="project" value="SGD"/>
</dbReference>
<dbReference type="GO" id="GO:0034605">
    <property type="term" value="P:cellular response to heat"/>
    <property type="evidence" value="ECO:0000314"/>
    <property type="project" value="SGD"/>
</dbReference>
<dbReference type="GO" id="GO:0051085">
    <property type="term" value="P:chaperone cofactor-dependent protein refolding"/>
    <property type="evidence" value="ECO:0000314"/>
    <property type="project" value="SGD"/>
</dbReference>
<dbReference type="GO" id="GO:0006620">
    <property type="term" value="P:post-translational protein targeting to endoplasmic reticulum membrane"/>
    <property type="evidence" value="ECO:0000303"/>
    <property type="project" value="ComplexPortal"/>
</dbReference>
<dbReference type="GO" id="GO:0034975">
    <property type="term" value="P:protein folding in endoplasmic reticulum"/>
    <property type="evidence" value="ECO:0000315"/>
    <property type="project" value="SGD"/>
</dbReference>
<dbReference type="GO" id="GO:0042026">
    <property type="term" value="P:protein refolding"/>
    <property type="evidence" value="ECO:0000318"/>
    <property type="project" value="GO_Central"/>
</dbReference>
<dbReference type="GO" id="GO:0043335">
    <property type="term" value="P:protein unfolding"/>
    <property type="evidence" value="ECO:0000315"/>
    <property type="project" value="SGD"/>
</dbReference>
<dbReference type="GO" id="GO:0035617">
    <property type="term" value="P:stress granule disassembly"/>
    <property type="evidence" value="ECO:0000314"/>
    <property type="project" value="SGD"/>
</dbReference>
<dbReference type="GO" id="GO:0005991">
    <property type="term" value="P:trehalose metabolic process"/>
    <property type="evidence" value="ECO:0000315"/>
    <property type="project" value="SGD"/>
</dbReference>
<dbReference type="CDD" id="cd00009">
    <property type="entry name" value="AAA"/>
    <property type="match status" value="1"/>
</dbReference>
<dbReference type="CDD" id="cd19499">
    <property type="entry name" value="RecA-like_ClpB_Hsp104-like"/>
    <property type="match status" value="1"/>
</dbReference>
<dbReference type="FunFam" id="1.10.1780.10:FF:000003">
    <property type="entry name" value="ATP-dependent chaperone ClpB"/>
    <property type="match status" value="1"/>
</dbReference>
<dbReference type="FunFam" id="1.10.8.60:FF:000017">
    <property type="entry name" value="ATP-dependent chaperone ClpB"/>
    <property type="match status" value="1"/>
</dbReference>
<dbReference type="FunFam" id="3.40.50.300:FF:000120">
    <property type="entry name" value="ATP-dependent chaperone ClpB"/>
    <property type="match status" value="1"/>
</dbReference>
<dbReference type="FunFam" id="3.40.50.300:FF:000025">
    <property type="entry name" value="ATP-dependent Clp protease subunit"/>
    <property type="match status" value="1"/>
</dbReference>
<dbReference type="FunFam" id="3.40.50.300:FF:000010">
    <property type="entry name" value="Chaperone clpB 1, putative"/>
    <property type="match status" value="1"/>
</dbReference>
<dbReference type="Gene3D" id="1.10.8.60">
    <property type="match status" value="1"/>
</dbReference>
<dbReference type="Gene3D" id="1.10.1780.10">
    <property type="entry name" value="Clp, N-terminal domain"/>
    <property type="match status" value="1"/>
</dbReference>
<dbReference type="Gene3D" id="3.40.50.300">
    <property type="entry name" value="P-loop containing nucleotide triphosphate hydrolases"/>
    <property type="match status" value="3"/>
</dbReference>
<dbReference type="InterPro" id="IPR003593">
    <property type="entry name" value="AAA+_ATPase"/>
</dbReference>
<dbReference type="InterPro" id="IPR003959">
    <property type="entry name" value="ATPase_AAA_core"/>
</dbReference>
<dbReference type="InterPro" id="IPR019489">
    <property type="entry name" value="Clp_ATPase_C"/>
</dbReference>
<dbReference type="InterPro" id="IPR036628">
    <property type="entry name" value="Clp_N_dom_sf"/>
</dbReference>
<dbReference type="InterPro" id="IPR004176">
    <property type="entry name" value="Clp_R_dom"/>
</dbReference>
<dbReference type="InterPro" id="IPR001270">
    <property type="entry name" value="ClpA/B"/>
</dbReference>
<dbReference type="InterPro" id="IPR018368">
    <property type="entry name" value="ClpA/B_CS1"/>
</dbReference>
<dbReference type="InterPro" id="IPR028299">
    <property type="entry name" value="ClpA/B_CS2"/>
</dbReference>
<dbReference type="InterPro" id="IPR041546">
    <property type="entry name" value="ClpA/ClpB_AAA_lid"/>
</dbReference>
<dbReference type="InterPro" id="IPR050130">
    <property type="entry name" value="ClpA_ClpB"/>
</dbReference>
<dbReference type="InterPro" id="IPR027417">
    <property type="entry name" value="P-loop_NTPase"/>
</dbReference>
<dbReference type="PANTHER" id="PTHR11638">
    <property type="entry name" value="ATP-DEPENDENT CLP PROTEASE"/>
    <property type="match status" value="1"/>
</dbReference>
<dbReference type="PANTHER" id="PTHR11638:SF18">
    <property type="entry name" value="HEAT SHOCK PROTEIN 104"/>
    <property type="match status" value="1"/>
</dbReference>
<dbReference type="Pfam" id="PF00004">
    <property type="entry name" value="AAA"/>
    <property type="match status" value="1"/>
</dbReference>
<dbReference type="Pfam" id="PF07724">
    <property type="entry name" value="AAA_2"/>
    <property type="match status" value="1"/>
</dbReference>
<dbReference type="Pfam" id="PF17871">
    <property type="entry name" value="AAA_lid_9"/>
    <property type="match status" value="1"/>
</dbReference>
<dbReference type="Pfam" id="PF02861">
    <property type="entry name" value="Clp_N"/>
    <property type="match status" value="2"/>
</dbReference>
<dbReference type="Pfam" id="PF10431">
    <property type="entry name" value="ClpB_D2-small"/>
    <property type="match status" value="1"/>
</dbReference>
<dbReference type="PRINTS" id="PR00300">
    <property type="entry name" value="CLPPROTEASEA"/>
</dbReference>
<dbReference type="SMART" id="SM00382">
    <property type="entry name" value="AAA"/>
    <property type="match status" value="2"/>
</dbReference>
<dbReference type="SMART" id="SM01086">
    <property type="entry name" value="ClpB_D2-small"/>
    <property type="match status" value="1"/>
</dbReference>
<dbReference type="SUPFAM" id="SSF81923">
    <property type="entry name" value="Double Clp-N motif"/>
    <property type="match status" value="1"/>
</dbReference>
<dbReference type="SUPFAM" id="SSF52540">
    <property type="entry name" value="P-loop containing nucleoside triphosphate hydrolases"/>
    <property type="match status" value="2"/>
</dbReference>
<dbReference type="PROSITE" id="PS51903">
    <property type="entry name" value="CLP_R"/>
    <property type="match status" value="1"/>
</dbReference>
<dbReference type="PROSITE" id="PS00870">
    <property type="entry name" value="CLPAB_1"/>
    <property type="match status" value="1"/>
</dbReference>
<dbReference type="PROSITE" id="PS00871">
    <property type="entry name" value="CLPAB_2"/>
    <property type="match status" value="1"/>
</dbReference>
<evidence type="ECO:0000255" key="1"/>
<evidence type="ECO:0000255" key="2">
    <source>
        <dbReference type="PROSITE-ProRule" id="PRU01251"/>
    </source>
</evidence>
<evidence type="ECO:0000256" key="3">
    <source>
        <dbReference type="SAM" id="MobiDB-lite"/>
    </source>
</evidence>
<evidence type="ECO:0000269" key="4">
    <source>
    </source>
</evidence>
<evidence type="ECO:0000269" key="5">
    <source>
    </source>
</evidence>
<evidence type="ECO:0000269" key="6">
    <source>
    </source>
</evidence>
<evidence type="ECO:0000269" key="7">
    <source>
    </source>
</evidence>
<evidence type="ECO:0000269" key="8">
    <source>
    </source>
</evidence>
<evidence type="ECO:0000269" key="9">
    <source>
    </source>
</evidence>
<evidence type="ECO:0000269" key="10">
    <source>
    </source>
</evidence>
<evidence type="ECO:0000269" key="11">
    <source>
    </source>
</evidence>
<evidence type="ECO:0000269" key="12">
    <source>
    </source>
</evidence>
<evidence type="ECO:0000269" key="13">
    <source>
    </source>
</evidence>
<evidence type="ECO:0000269" key="14">
    <source>
    </source>
</evidence>
<evidence type="ECO:0000269" key="15">
    <source>
    </source>
</evidence>
<evidence type="ECO:0000269" key="16">
    <source>
    </source>
</evidence>
<evidence type="ECO:0000269" key="17">
    <source>
    </source>
</evidence>
<evidence type="ECO:0000269" key="18">
    <source>
    </source>
</evidence>
<evidence type="ECO:0000269" key="19">
    <source>
    </source>
</evidence>
<evidence type="ECO:0000269" key="20">
    <source>
    </source>
</evidence>
<evidence type="ECO:0000269" key="21">
    <source>
    </source>
</evidence>
<evidence type="ECO:0000269" key="22">
    <source>
    </source>
</evidence>
<evidence type="ECO:0000269" key="23">
    <source>
    </source>
</evidence>
<evidence type="ECO:0000269" key="24">
    <source>
    </source>
</evidence>
<evidence type="ECO:0000269" key="25">
    <source>
    </source>
</evidence>
<evidence type="ECO:0000269" key="26">
    <source>
    </source>
</evidence>
<evidence type="ECO:0000269" key="27">
    <source>
    </source>
</evidence>
<evidence type="ECO:0000269" key="28">
    <source>
    </source>
</evidence>
<evidence type="ECO:0000269" key="29">
    <source>
    </source>
</evidence>
<evidence type="ECO:0000269" key="30">
    <source>
    </source>
</evidence>
<evidence type="ECO:0000269" key="31">
    <source>
    </source>
</evidence>
<evidence type="ECO:0000269" key="32">
    <source>
    </source>
</evidence>
<evidence type="ECO:0000269" key="33">
    <source>
    </source>
</evidence>
<evidence type="ECO:0000269" key="34">
    <source>
    </source>
</evidence>
<evidence type="ECO:0000269" key="35">
    <source>
    </source>
</evidence>
<evidence type="ECO:0000269" key="36">
    <source>
    </source>
</evidence>
<evidence type="ECO:0000269" key="37">
    <source>
    </source>
</evidence>
<evidence type="ECO:0000269" key="38">
    <source>
    </source>
</evidence>
<evidence type="ECO:0000269" key="39">
    <source>
    </source>
</evidence>
<evidence type="ECO:0000269" key="40">
    <source>
    </source>
</evidence>
<evidence type="ECO:0000269" key="41">
    <source>
    </source>
</evidence>
<evidence type="ECO:0000269" key="42">
    <source>
    </source>
</evidence>
<evidence type="ECO:0000269" key="43">
    <source>
    </source>
</evidence>
<evidence type="ECO:0000269" key="44">
    <source>
    </source>
</evidence>
<evidence type="ECO:0000269" key="45">
    <source>
    </source>
</evidence>
<evidence type="ECO:0000269" key="46">
    <source>
    </source>
</evidence>
<evidence type="ECO:0000269" key="47">
    <source>
    </source>
</evidence>
<evidence type="ECO:0000305" key="48"/>
<evidence type="ECO:0007744" key="49">
    <source>
    </source>
</evidence>
<evidence type="ECO:0007744" key="50">
    <source>
    </source>
</evidence>
<evidence type="ECO:0007744" key="51">
    <source>
    </source>
</evidence>
<evidence type="ECO:0007744" key="52">
    <source>
    </source>
</evidence>
<evidence type="ECO:0007829" key="53">
    <source>
        <dbReference type="PDB" id="5U2U"/>
    </source>
</evidence>
<evidence type="ECO:0007829" key="54">
    <source>
        <dbReference type="PDB" id="5WBW"/>
    </source>
</evidence>
<sequence length="908" mass="102035">MNDQTQFTERALTILTLAQKLASDHQHPQLQPIHILAAFIETPEDGSVPYLQNLIEKGRYDYDLFKKVVNRNLVRIPQQQPAPAEITPSYALGKVLQDAAKIQKQQKDSFIAQDHILFALFNDSSIQQIFKEAQVDIEAIKQQALELRGNTRIDSRGADTNTPLEYLSKYAIDMTEQARQGKLDPVIGREEEIRSTIRVLARRIKSNPCLIGEPGIGKTAIIEGVAQRIIDDDVPTILQGAKLFSLDLAALTAGAKYKGDFEERFKGVLKEIEESKTLIVLFIDEIHMLMGNGKDDAANILKPALSRGQLKVIGATTNNEYRSIVEKDGAFERRFQKIEVAEPSVRQTVAILRGLQPKYEIHHGVRILDSALVTAAQLAKRYLPYRRLPDSALDLVDISCAGVAVARDSKPEELDSKERQLQLIQVEIKALERDEDADSTTKDRLKLARQKEASLQEELEPLRQRYNEEKHGHEELTQAKKKLDELENKALDAERRYDTATAADLRYFAIPDIKKQIEKLEDQVAEEERRAGANSMIQNVVDSDTISETAARLTGIPVKKLSESENEKLIHMERDLSSEVVGQMDAIKAVSNAVRLSRSGLANPRQPASFLFLGLSGSGKTELAKKVAGFLFNDEDMMIRVDCSELSEKYAVSKLLGTTAGYVGYDEGGFLTNQLQYKPYSVLLFDEVEKAHPDVLTVMLQMLDDGRITSGQGKTIDCSNCIVIMTSNLGAEFINSQQGSKIQESTKNLVMGAVRQHFRPEFLNRISSIVIFNKLSRKAIHKIVDIRLKEIEERFEQNDKHYKLNLTQEAKDFLAKYGYSDDMGARPLNRLIQNEILNKLALRILKNEIKDKETVNVVLKKGKSRDENVPEEAEECLEVLPNHEATIGADTLGDDDNEDSMEIDDDLD</sequence>
<comment type="function">
    <text evidence="4 5 7 8 14 16 22 23 24 25 26 28 29 30 31 32 33 37 39 40 41 43 44 45 47">Required, in concert with Hsp40 (YDJ1) and Hsp70 (SSA1) and small Hsps (HSP26), for the dissociation, resolubilization and refolding of aggregates of damaged proteins after heat or other environmental stresses. Extracts proteins from aggregates by unfolding and threading them in an ATP-dependent process through the axial channel of the protein hexamer, after which they can be refolded by components of the Hsp70/Hsp40 chaperone system. Substrate binding is ATP-dependent, and release of bound polypeptide is triggered by ATP hydrolysis. Also responsible for the maintenance of prions by dissociating prion fibrils into smaller oligomers, thereby producing transmissible seeds that can infect daughter cells during mitosis and meiosis. Loss of HSP104 can cure yeast cells of the prions [PSI+], [URE3] and [PIN+]. Excess HSP104 can also specifically cure cells of [PSI+].</text>
</comment>
<comment type="activity regulation">
    <text evidence="19">Inhibited by micromolar concentrations of guanidinium chloride. Inhibits the ATPase activity, but does not dissociate the hexameric protein.</text>
</comment>
<comment type="biophysicochemical properties">
    <kinetics>
        <KM evidence="6 10 22 45 46">170 uM for ATP (at NBD1)</KM>
        <KM evidence="6 10 22 45 46">4.7 uM for ATP (at NBD2)</KM>
        <Vmax evidence="6 10 22 45 46">1.25 nmol/min/ug enzyme for ATP</Vmax>
    </kinetics>
</comment>
<comment type="subunit">
    <text evidence="6 9 27 35 36 42 45 47">Homohexamer, forming a ring with a central pore. The hexamer is stabilized by high protein concentrations and by ADP or ATP. Oligomerization influences ATP hydrolysis activity at NBD2. Interacts with YDJ1. Interacts (via C-terminal DDLD tetrapeptide) with CNS1, CPR7 and STI1 (via TPR repeats); under respiratory growth conditions.</text>
</comment>
<comment type="interaction">
    <interactant intactId="EBI-8050">
        <id>P31539</id>
    </interactant>
    <interactant intactId="EBI-8050">
        <id>P31539</id>
        <label>HSP104</label>
    </interactant>
    <organismsDiffer>false</organismsDiffer>
    <experiments>3</experiments>
</comment>
<comment type="interaction">
    <interactant intactId="EBI-8050">
        <id>P31539</id>
    </interactant>
    <interactant intactId="EBI-34904">
        <id>Q12285</id>
        <label>MDY2</label>
    </interactant>
    <organismsDiffer>false</organismsDiffer>
    <experiments>2</experiments>
</comment>
<comment type="subcellular location">
    <subcellularLocation>
        <location>Cytoplasm</location>
    </subcellularLocation>
    <subcellularLocation>
        <location>Nucleus</location>
    </subcellularLocation>
    <text>Shuttles between the cytoplasm and the nucleus in an importin KAP95- and KAP121-dependent and an exportin XPO1-dependent manner. Accumulation in the nucleus is enhanced by severe heat shock. In the cytoplasm, concentrates on a perivacuolar compartment, the 'insoluble protein deposit' (IPOD), in which terminally aggregated proteins are sequestered. It is also found, to a lesser extent, at a 'juxtanuclear quality control' (JUNQ) compartment, where soluble ubiquitinated misfolded proteins accumulate.</text>
</comment>
<comment type="induction">
    <text evidence="12 21 26 42 44">By heat stress dependent on the heat shock transcription factor HSF1 and the general stress transcription factors MSN2 and MSN4. Expressed at a higher level in respiring cells than in fermenting cells. Expressed in stationary phase cells and spores (at protein level).</text>
</comment>
<comment type="domain">
    <text>Has 2 AAA ATPase type nucleotide-binding domains (NBDs) per monomer, a low-affinity, high-turnover site (NBD1) and a high-affinity site (NBD2) with a 300-fold slower rate of hydrolysis. There is allosteric regulation between the 2 sites. ATP binding to NBD1 triggers binding of polypeptides and stimulates ATP hydrolysis at NBD2. Nucleotide binding to NBD2 is crucial for oligomerization.</text>
</comment>
<comment type="domain">
    <text>The C-terminal extension is involved in oligomerization.</text>
</comment>
<comment type="miscellaneous">
    <text evidence="18">Present with 32800 molecules/cell in log phase SD medium.</text>
</comment>
<comment type="similarity">
    <text evidence="48">Belongs to the ClpA/ClpB family.</text>
</comment>
<gene>
    <name type="primary">HSP104</name>
    <name type="ordered locus">YLL026W</name>
    <name type="ORF">L0948</name>
</gene>
<accession>P31539</accession>
<accession>D6VXX8</accession>
<proteinExistence type="evidence at protein level"/>
<protein>
    <recommendedName>
        <fullName>Heat shock protein 104</fullName>
    </recommendedName>
    <alternativeName>
        <fullName>Protein aggregation-remodeling factor HSP104</fullName>
    </alternativeName>
</protein>
<feature type="chain" id="PRO_0000191212" description="Heat shock protein 104">
    <location>
        <begin position="1"/>
        <end position="908"/>
    </location>
</feature>
<feature type="domain" description="Clp R" evidence="2">
    <location>
        <begin position="4"/>
        <end position="150"/>
    </location>
</feature>
<feature type="region of interest" description="Repeat 1" evidence="2">
    <location>
        <begin position="7"/>
        <end position="76"/>
    </location>
</feature>
<feature type="region of interest" description="Repeat 2" evidence="2">
    <location>
        <begin position="88"/>
        <end position="150"/>
    </location>
</feature>
<feature type="region of interest" description="NBD1">
    <location>
        <begin position="167"/>
        <end position="411"/>
    </location>
</feature>
<feature type="region of interest" description="NBD2">
    <location>
        <begin position="541"/>
        <end position="731"/>
    </location>
</feature>
<feature type="region of interest" description="Disordered" evidence="3">
    <location>
        <begin position="883"/>
        <end position="908"/>
    </location>
</feature>
<feature type="region of interest" description="Interaction surface for TPR repeats">
    <location>
        <begin position="905"/>
        <end position="908"/>
    </location>
</feature>
<feature type="coiled-coil region" evidence="1">
    <location>
        <begin position="412"/>
        <end position="536"/>
    </location>
</feature>
<feature type="short sequence motif" description="Nuclear localization signal">
    <location>
        <begin position="773"/>
        <end position="789"/>
    </location>
</feature>
<feature type="compositionally biased region" description="Acidic residues" evidence="3">
    <location>
        <begin position="892"/>
        <end position="908"/>
    </location>
</feature>
<feature type="binding site" evidence="1">
    <location>
        <begin position="212"/>
        <end position="219"/>
    </location>
    <ligand>
        <name>ATP</name>
        <dbReference type="ChEBI" id="CHEBI:30616"/>
        <label>1</label>
    </ligand>
</feature>
<feature type="binding site" evidence="1">
    <location>
        <begin position="614"/>
        <end position="621"/>
    </location>
    <ligand>
        <name>ATP</name>
        <dbReference type="ChEBI" id="CHEBI:30616"/>
        <label>2</label>
    </ligand>
</feature>
<feature type="modified residue" description="N-acetylmethionine" evidence="52">
    <location>
        <position position="1"/>
    </location>
</feature>
<feature type="modified residue" description="Phosphoserine" evidence="49 50">
    <location>
        <position position="206"/>
    </location>
</feature>
<feature type="modified residue" description="Phosphoserine" evidence="49">
    <location>
        <position position="306"/>
    </location>
</feature>
<feature type="modified residue" description="Phosphothreonine" evidence="49">
    <location>
        <position position="499"/>
    </location>
</feature>
<feature type="modified residue" description="Phosphoserine" evidence="49">
    <location>
        <position position="535"/>
    </location>
</feature>
<feature type="cross-link" description="Glycyl lysine isopeptide (Lys-Gly) (interchain with G-Cter in ubiquitin)" evidence="51">
    <location>
        <position position="442"/>
    </location>
</feature>
<feature type="cross-link" description="Glycyl lysine isopeptide (Lys-Gly) (interchain with G-Cter in ubiquitin)" evidence="17">
    <location>
        <position position="620"/>
    </location>
</feature>
<feature type="mutagenesis site" description="Confers resistance to prion-curing by guanidine." evidence="15">
    <original>D</original>
    <variation>A</variation>
    <variation>D</variation>
    <variation>F</variation>
    <variation>N</variation>
    <variation>L</variation>
    <variation>Q</variation>
    <variation>S</variation>
    <location>
        <position position="184"/>
    </location>
</feature>
<feature type="mutagenesis site" description="Impairs prion propagation." evidence="15">
    <original>D</original>
    <variation>K</variation>
    <variation>W</variation>
    <variation>Y</variation>
    <location>
        <position position="184"/>
    </location>
</feature>
<feature type="mutagenesis site" description="Largely reduces ATP hydrolysis. Alters bud morphology and causes septin mislocalization; when associated with I-499." evidence="6 20 46">
    <original>G</original>
    <variation>S</variation>
    <location>
        <position position="217"/>
    </location>
</feature>
<feature type="mutagenesis site" description="Completely abolishes ATP hydrolysis." evidence="6 20 46">
    <original>G</original>
    <variation>V</variation>
    <location>
        <position position="217"/>
    </location>
</feature>
<feature type="mutagenesis site" description="Abolishes substrate binding. Unable to confer thermotolerance. Reduces ATP hydrolysis by 98%; when associated with T-315. Completely abolishes ATPase activity; when associated with T-620." evidence="6 8 13 14 27 31 33 38 42 46">
    <original>K</original>
    <variation>T</variation>
    <location>
        <position position="218"/>
    </location>
</feature>
<feature type="mutagenesis site" description="Reduces thermotolerance 10-fold." evidence="22">
    <original>Y</original>
    <variation>A</variation>
    <location>
        <position position="257"/>
    </location>
</feature>
<feature type="mutagenesis site" description="In HSP104(TRAP); completely abolishes ATP hydrolysis, but does not affect nucleotide binding, thus keeping HSP104 in an ATP-bound state; when associated with Q-687." evidence="27 33">
    <original>E</original>
    <variation>Q</variation>
    <location>
        <position position="285"/>
    </location>
</feature>
<feature type="mutagenesis site" description="Reduces ATP hydrolysis by 98%; when associated with T-218." evidence="13">
    <original>A</original>
    <variation>T</variation>
    <location>
        <position position="315"/>
    </location>
</feature>
<feature type="mutagenesis site" description="Reduces rate of ATP hydrolysis at NBD1 nearly 10-fold. No effect on oligomerization." evidence="10 31">
    <original>T</original>
    <variation>A</variation>
    <location>
        <position position="317"/>
    </location>
</feature>
<feature type="mutagenesis site" description="Reduces ATPase activity by 80%. Impairs oligomerization." evidence="35">
    <original>R</original>
    <variation>M</variation>
    <location>
        <position position="334"/>
    </location>
</feature>
<feature type="mutagenesis site" description="Reduces ATPase activity by 80%." evidence="35">
    <original>R</original>
    <variation>M</variation>
    <location>
        <position position="419"/>
    </location>
</feature>
<feature type="mutagenesis site" description="Reduces ATPase activity by 80%." evidence="35">
    <original>R</original>
    <variation>M</variation>
    <location>
        <position position="444"/>
    </location>
</feature>
<feature type="mutagenesis site" description="Impairs prion propagation, but does not affect thermotolerance." evidence="32">
    <original>L</original>
    <variation>R</variation>
    <location>
        <position position="462"/>
    </location>
</feature>
<feature type="mutagenesis site" description="Increases ATPase activity 3-fold." evidence="35">
    <original>R</original>
    <variation>M</variation>
    <location>
        <position position="495"/>
    </location>
</feature>
<feature type="mutagenesis site" description="Reduces ATP hydrolysis by 50%. Alters bud morphology and causes septin mislocalization; when associated with S-217." evidence="20">
    <original>T</original>
    <variation>I</variation>
    <location>
        <position position="499"/>
    </location>
</feature>
<feature type="mutagenesis site" description="Increases basal level of ATPase activity and abolishes stimulation of ATP hydrolysis upon substrate binding. Inhibits growth at 37 degrees Celsius." evidence="13 20">
    <original>A</original>
    <variation>V</variation>
    <location>
        <position position="503"/>
    </location>
</feature>
<feature type="mutagenesis site" description="Reduces thermotolerance." evidence="20">
    <original>A</original>
    <variation>D</variation>
    <location>
        <position position="509"/>
    </location>
</feature>
<feature type="mutagenesis site" description="Impairs prion propagation, but does not affect thermotolerance." evidence="32">
    <original>P</original>
    <variation>L</variation>
    <location>
        <position position="557"/>
    </location>
</feature>
<feature type="mutagenesis site" description="Impairs oligomerization at low protein concentrations." evidence="6 46">
    <original>G</original>
    <variation>V</variation>
    <location>
        <position position="619"/>
    </location>
</feature>
<feature type="mutagenesis site" description="Impairs oligomerization at low protein concentrations. Reduces ATP hydrolysis rate. Unable to confer thermotolerance. Completely abolishes ATPase activity; when associated with T-218." evidence="6 8 14 27 31 33 38 42 46">
    <original>K</original>
    <variation>T</variation>
    <location>
        <position position="620"/>
    </location>
</feature>
<feature type="mutagenesis site" description="Reduces ATP hydrolysis, but does not affect oligomerization." evidence="6">
    <original>T</original>
    <variation>A</variation>
    <location>
        <position position="621"/>
    </location>
</feature>
<feature type="mutagenesis site" description="Abolishes the ability to refold aggregated protein in vitro and to provide thermotolerance in vivo." evidence="22">
    <original>E</original>
    <variation>K</variation>
    <location>
        <position position="645"/>
    </location>
</feature>
<feature type="mutagenesis site" description="Abolishes the ability to refold aggregated protein in vitro and to provide thermotolerance in vivo." evidence="22">
    <original>Y</original>
    <variation>A</variation>
    <variation>K</variation>
    <location>
        <position position="662"/>
    </location>
</feature>
<feature type="mutagenesis site" description="No effect." evidence="22">
    <original>Y</original>
    <variation>F</variation>
    <variation>W</variation>
    <location>
        <position position="662"/>
    </location>
</feature>
<feature type="mutagenesis site" description="In HSP104(TRAP); completely abolishes ATP hydrolysis, but does not affect nucleotide binding, thus keeping HSP104 in an ATP-bound state; when associated with Q-285." evidence="27 33">
    <original>E</original>
    <variation>Q</variation>
    <location>
        <position position="687"/>
    </location>
</feature>
<feature type="mutagenesis site" description="Impairs prion propagation, but does not affect thermotolerance." evidence="32">
    <original>D</original>
    <variation>N</variation>
    <location>
        <position position="704"/>
    </location>
</feature>
<feature type="mutagenesis site" description="Almost completely abolishes ATP hydrolysis at NBD2, but does not affect nucleotide binding, thus keeping NBD2 in an ATP-bound state. Reduces stimulation of ATP hydrolysis upon substrate binding." evidence="10 13 31 35">
    <original>N</original>
    <variation>A</variation>
    <location>
        <position position="728"/>
    </location>
</feature>
<feature type="mutagenesis site" description="Can oligomerize in the absence of nucleotides." evidence="35">
    <original>R</original>
    <variation>M</variation>
    <location>
        <position position="765"/>
    </location>
</feature>
<feature type="mutagenesis site" description="In NLS17KA; fails to concentrate in the nucleus; when associated with A-782 and A-789." evidence="34">
    <original>K</original>
    <variation>A</variation>
    <location>
        <position position="778"/>
    </location>
</feature>
<feature type="mutagenesis site" description="In NLS17KA; fails to concentrate in the nucleus; when associated with A-778 and A-789." evidence="34">
    <original>K</original>
    <variation>A</variation>
    <location>
        <position position="782"/>
    </location>
</feature>
<feature type="mutagenesis site" description="In NLS17KA; fails to concentrate in the nucleus; when associated with A-778 and A-782." evidence="34">
    <original>K</original>
    <variation>A</variation>
    <location>
        <position position="789"/>
    </location>
</feature>
<feature type="mutagenesis site" description="Site-specific fluorescent probe in an otherwise Trp-less HSP104. Fluorescence of this Trp changes in response to ATP and ADP binding at NBD2. Has no effect on ATP hydrolysis or protein stability." evidence="11">
    <original>Y</original>
    <variation>W</variation>
    <location>
        <position position="819"/>
    </location>
</feature>
<feature type="mutagenesis site" description="Reduces ATP and ADP binding at NBD2 6-fold, but does not affect ATP hydrolysis at NBD2. Reduces catalytic rate at NBD1." evidence="11">
    <original>R</original>
    <variation>M</variation>
    <location>
        <position position="826"/>
    </location>
</feature>
<feature type="helix" evidence="53">
    <location>
        <begin position="9"/>
        <end position="24"/>
    </location>
</feature>
<feature type="strand" evidence="53">
    <location>
        <begin position="28"/>
        <end position="30"/>
    </location>
</feature>
<feature type="helix" evidence="53">
    <location>
        <begin position="32"/>
        <end position="39"/>
    </location>
</feature>
<feature type="helix" evidence="53">
    <location>
        <begin position="50"/>
        <end position="57"/>
    </location>
</feature>
<feature type="helix" evidence="53">
    <location>
        <begin position="62"/>
        <end position="73"/>
    </location>
</feature>
<feature type="helix" evidence="53">
    <location>
        <begin position="90"/>
        <end position="105"/>
    </location>
</feature>
<feature type="strand" evidence="53">
    <location>
        <begin position="109"/>
        <end position="111"/>
    </location>
</feature>
<feature type="helix" evidence="53">
    <location>
        <begin position="113"/>
        <end position="120"/>
    </location>
</feature>
<feature type="helix" evidence="53">
    <location>
        <begin position="124"/>
        <end position="132"/>
    </location>
</feature>
<feature type="helix" evidence="53">
    <location>
        <begin position="137"/>
        <end position="148"/>
    </location>
</feature>
<feature type="helix" evidence="54">
    <location>
        <begin position="165"/>
        <end position="170"/>
    </location>
</feature>
<feature type="strand" evidence="54">
    <location>
        <begin position="171"/>
        <end position="173"/>
    </location>
</feature>
<feature type="helix" evidence="54">
    <location>
        <begin position="174"/>
        <end position="179"/>
    </location>
</feature>
<feature type="helix" evidence="54">
    <location>
        <begin position="190"/>
        <end position="200"/>
    </location>
</feature>
<feature type="strand" evidence="54">
    <location>
        <begin position="203"/>
        <end position="205"/>
    </location>
</feature>
<feature type="strand" evidence="54">
    <location>
        <begin position="207"/>
        <end position="212"/>
    </location>
</feature>
<feature type="helix" evidence="54">
    <location>
        <begin position="218"/>
        <end position="230"/>
    </location>
</feature>
<feature type="helix" evidence="54">
    <location>
        <begin position="236"/>
        <end position="238"/>
    </location>
</feature>
<feature type="strand" evidence="54">
    <location>
        <begin position="242"/>
        <end position="246"/>
    </location>
</feature>
<feature type="helix" evidence="54">
    <location>
        <begin position="248"/>
        <end position="252"/>
    </location>
</feature>
<feature type="helix" evidence="54">
    <location>
        <begin position="260"/>
        <end position="273"/>
    </location>
</feature>
<feature type="strand" evidence="54">
    <location>
        <begin position="279"/>
        <end position="283"/>
    </location>
</feature>
<feature type="turn" evidence="54">
    <location>
        <begin position="284"/>
        <end position="286"/>
    </location>
</feature>
<feature type="helix" evidence="54">
    <location>
        <begin position="287"/>
        <end position="290"/>
    </location>
</feature>
<feature type="helix" evidence="54">
    <location>
        <begin position="298"/>
        <end position="306"/>
    </location>
</feature>
<feature type="strand" evidence="54">
    <location>
        <begin position="311"/>
        <end position="316"/>
    </location>
</feature>
<feature type="helix" evidence="54">
    <location>
        <begin position="318"/>
        <end position="327"/>
    </location>
</feature>
<feature type="helix" evidence="54">
    <location>
        <begin position="330"/>
        <end position="334"/>
    </location>
</feature>
<feature type="strand" evidence="54">
    <location>
        <begin position="335"/>
        <end position="339"/>
    </location>
</feature>
<feature type="turn" evidence="54">
    <location>
        <begin position="344"/>
        <end position="346"/>
    </location>
</feature>
<feature type="helix" evidence="54">
    <location>
        <begin position="347"/>
        <end position="350"/>
    </location>
</feature>
<feature type="turn" evidence="54">
    <location>
        <begin position="351"/>
        <end position="355"/>
    </location>
</feature>
<organism>
    <name type="scientific">Saccharomyces cerevisiae (strain ATCC 204508 / S288c)</name>
    <name type="common">Baker's yeast</name>
    <dbReference type="NCBI Taxonomy" id="559292"/>
    <lineage>
        <taxon>Eukaryota</taxon>
        <taxon>Fungi</taxon>
        <taxon>Dikarya</taxon>
        <taxon>Ascomycota</taxon>
        <taxon>Saccharomycotina</taxon>
        <taxon>Saccharomycetes</taxon>
        <taxon>Saccharomycetales</taxon>
        <taxon>Saccharomycetaceae</taxon>
        <taxon>Saccharomyces</taxon>
    </lineage>
</organism>
<keyword id="KW-0002">3D-structure</keyword>
<keyword id="KW-0007">Acetylation</keyword>
<keyword id="KW-0067">ATP-binding</keyword>
<keyword id="KW-0143">Chaperone</keyword>
<keyword id="KW-0175">Coiled coil</keyword>
<keyword id="KW-0963">Cytoplasm</keyword>
<keyword id="KW-1017">Isopeptide bond</keyword>
<keyword id="KW-0547">Nucleotide-binding</keyword>
<keyword id="KW-0539">Nucleus</keyword>
<keyword id="KW-0597">Phosphoprotein</keyword>
<keyword id="KW-1185">Reference proteome</keyword>
<keyword id="KW-0677">Repeat</keyword>
<keyword id="KW-0346">Stress response</keyword>
<keyword id="KW-0832">Ubl conjugation</keyword>
<reference key="1">
    <citation type="journal article" date="1991" name="Nature">
        <title>Hsp104 is a highly conserved protein with two essential nucleotide-binding sites.</title>
        <authorList>
            <person name="Parsell D.A."/>
            <person name="Sanchez Y."/>
            <person name="Stitzel J.D."/>
            <person name="Lindquist S.L."/>
        </authorList>
    </citation>
    <scope>NUCLEOTIDE SEQUENCE [GENOMIC DNA]</scope>
    <scope>MUTAGENESIS OF LYS-218 AND LYS-620</scope>
    <source>
        <strain>ATCC 26109 / X2180 / NCYC 826</strain>
    </source>
</reference>
<reference key="2">
    <citation type="journal article" date="1997" name="Nature">
        <title>The nucleotide sequence of Saccharomyces cerevisiae chromosome XII.</title>
        <authorList>
            <person name="Johnston M."/>
            <person name="Hillier L.W."/>
            <person name="Riles L."/>
            <person name="Albermann K."/>
            <person name="Andre B."/>
            <person name="Ansorge W."/>
            <person name="Benes V."/>
            <person name="Brueckner M."/>
            <person name="Delius H."/>
            <person name="Dubois E."/>
            <person name="Duesterhoeft A."/>
            <person name="Entian K.-D."/>
            <person name="Floeth M."/>
            <person name="Goffeau A."/>
            <person name="Hebling U."/>
            <person name="Heumann K."/>
            <person name="Heuss-Neitzel D."/>
            <person name="Hilbert H."/>
            <person name="Hilger F."/>
            <person name="Kleine K."/>
            <person name="Koetter P."/>
            <person name="Louis E.J."/>
            <person name="Messenguy F."/>
            <person name="Mewes H.-W."/>
            <person name="Miosga T."/>
            <person name="Moestl D."/>
            <person name="Mueller-Auer S."/>
            <person name="Nentwich U."/>
            <person name="Obermaier B."/>
            <person name="Piravandi E."/>
            <person name="Pohl T.M."/>
            <person name="Portetelle D."/>
            <person name="Purnelle B."/>
            <person name="Rechmann S."/>
            <person name="Rieger M."/>
            <person name="Rinke M."/>
            <person name="Rose M."/>
            <person name="Scharfe M."/>
            <person name="Scherens B."/>
            <person name="Scholler P."/>
            <person name="Schwager C."/>
            <person name="Schwarz S."/>
            <person name="Underwood A.P."/>
            <person name="Urrestarazu L.A."/>
            <person name="Vandenbol M."/>
            <person name="Verhasselt P."/>
            <person name="Vierendeels F."/>
            <person name="Voet M."/>
            <person name="Volckaert G."/>
            <person name="Voss H."/>
            <person name="Wambutt R."/>
            <person name="Wedler E."/>
            <person name="Wedler H."/>
            <person name="Zimmermann F.K."/>
            <person name="Zollner A."/>
            <person name="Hani J."/>
            <person name="Hoheisel J.D."/>
        </authorList>
    </citation>
    <scope>NUCLEOTIDE SEQUENCE [LARGE SCALE GENOMIC DNA]</scope>
    <source>
        <strain>ATCC 204508 / S288c</strain>
    </source>
</reference>
<reference key="3">
    <citation type="journal article" date="2014" name="G3 (Bethesda)">
        <title>The reference genome sequence of Saccharomyces cerevisiae: Then and now.</title>
        <authorList>
            <person name="Engel S.R."/>
            <person name="Dietrich F.S."/>
            <person name="Fisk D.G."/>
            <person name="Binkley G."/>
            <person name="Balakrishnan R."/>
            <person name="Costanzo M.C."/>
            <person name="Dwight S.S."/>
            <person name="Hitz B.C."/>
            <person name="Karra K."/>
            <person name="Nash R.S."/>
            <person name="Weng S."/>
            <person name="Wong E.D."/>
            <person name="Lloyd P."/>
            <person name="Skrzypek M.S."/>
            <person name="Miyasato S.R."/>
            <person name="Simison M."/>
            <person name="Cherry J.M."/>
        </authorList>
    </citation>
    <scope>GENOME REANNOTATION</scope>
    <source>
        <strain>ATCC 204508 / S288c</strain>
    </source>
</reference>
<reference key="4">
    <citation type="journal article" date="2007" name="Genome Res.">
        <title>Approaching a complete repository of sequence-verified protein-encoding clones for Saccharomyces cerevisiae.</title>
        <authorList>
            <person name="Hu Y."/>
            <person name="Rolfs A."/>
            <person name="Bhullar B."/>
            <person name="Murthy T.V.S."/>
            <person name="Zhu C."/>
            <person name="Berger M.F."/>
            <person name="Camargo A.A."/>
            <person name="Kelley F."/>
            <person name="McCarron S."/>
            <person name="Jepson D."/>
            <person name="Richardson A."/>
            <person name="Raphael J."/>
            <person name="Moreira D."/>
            <person name="Taycher E."/>
            <person name="Zuo D."/>
            <person name="Mohr S."/>
            <person name="Kane M.F."/>
            <person name="Williamson J."/>
            <person name="Simpson A.J.G."/>
            <person name="Bulyk M.L."/>
            <person name="Harlow E."/>
            <person name="Marsischky G."/>
            <person name="Kolodner R.D."/>
            <person name="LaBaer J."/>
        </authorList>
    </citation>
    <scope>NUCLEOTIDE SEQUENCE [GENOMIC DNA]</scope>
    <source>
        <strain>ATCC 204508 / S288c</strain>
    </source>
</reference>
<reference key="5">
    <citation type="journal article" date="1997" name="Yeast">
        <title>The sequence of 32kb on the left arm of yeast chromosome XII reveals six known genes, a new member of the seripauperins family and a new ABC transporter homologous to the human multidrug resistance protein.</title>
        <authorList>
            <person name="Purnelle B."/>
            <person name="Goffeau A."/>
        </authorList>
    </citation>
    <scope>NUCLEOTIDE SEQUENCE [GENOMIC DNA] OF 749-908</scope>
    <source>
        <strain>ATCC 204508 / S288c</strain>
    </source>
</reference>
<reference key="6">
    <citation type="journal article" date="1990" name="Science">
        <title>HSP104 required for induced thermotolerance.</title>
        <authorList>
            <person name="Sanchez Y."/>
            <person name="Lindquist S.L."/>
        </authorList>
    </citation>
    <scope>FUNCTION</scope>
</reference>
<reference key="7">
    <citation type="journal article" date="1992" name="EMBO J.">
        <title>Hsp104 is required for tolerance to many forms of stress.</title>
        <authorList>
            <person name="Sanchez Y."/>
            <person name="Taulien J."/>
            <person name="Borkovich K.A."/>
            <person name="Lindquist S.L."/>
        </authorList>
    </citation>
    <scope>FUNCTION</scope>
    <scope>INDUCTION</scope>
</reference>
<reference key="8">
    <citation type="journal article" date="1993" name="J. Bacteriol.">
        <title>Genetic evidence for a functional relationship between Hsp104 and Hsp70.</title>
        <authorList>
            <person name="Sanchez Y."/>
            <person name="Parsell D.A."/>
            <person name="Taulien J."/>
            <person name="Vogel J.L."/>
            <person name="Craig E.A."/>
            <person name="Lindquist S.L."/>
        </authorList>
    </citation>
    <scope>FUNCTION</scope>
</reference>
<reference key="9">
    <citation type="journal article" date="1994" name="J. Biol. Chem.">
        <title>Saccharomyces cerevisiae Hsp104 protein. Purification and characterization of ATP-induced structural changes.</title>
        <authorList>
            <person name="Parsell D.A."/>
            <person name="Kowal A.S."/>
            <person name="Lindquist S.L."/>
        </authorList>
    </citation>
    <scope>INDUCTION</scope>
    <scope>MUTAGENESIS OF LYS-218 AND LYS-620</scope>
    <scope>SUBUNIT</scope>
    <scope>ELECTRON MICROSCOPY</scope>
</reference>
<reference key="10">
    <citation type="journal article" date="1994" name="Nature">
        <title>Protein disaggregation mediated by heat-shock protein Hsp104.</title>
        <authorList>
            <person name="Parsell D.A."/>
            <person name="Kowal A.S."/>
            <person name="Singer M.A."/>
            <person name="Lindquist S.L."/>
        </authorList>
    </citation>
    <scope>FUNCTION</scope>
</reference>
<reference key="11">
    <citation type="journal article" date="1995" name="Science">
        <title>Role of the chaperone protein Hsp104 in propagation of the yeast prion-like factor [psi+].</title>
        <authorList>
            <person name="Chernoff Y.O."/>
            <person name="Lindquist S.L."/>
            <person name="Ono B."/>
            <person name="Inge-Vechtomov S.G."/>
            <person name="Liebman S.W."/>
        </authorList>
    </citation>
    <scope>FUNCTION IN PRION MAINTENANCE</scope>
</reference>
<reference key="12">
    <citation type="journal article" date="1996" name="Proc. Natl. Acad. Sci. U.S.A.">
        <title>Heat-shock protein 104 expression is sufficient for thermotolerance in yeast.</title>
        <authorList>
            <person name="Lindquist S.L."/>
            <person name="Kim G."/>
        </authorList>
    </citation>
    <scope>FUNCTION</scope>
    <scope>INDUCTION</scope>
</reference>
<reference key="13">
    <citation type="journal article" date="1998" name="Biochem. Biophys. Res. Commun.">
        <title>Hsp104 responds to heat and oxidative stress with different intracellular localization in Saccharomyces cerevisiae.</title>
        <authorList>
            <person name="Fujita K."/>
            <person name="Kawai R."/>
            <person name="Iwahashi H."/>
            <person name="Komatsu Y."/>
        </authorList>
    </citation>
    <scope>SUBCELLULAR LOCATION</scope>
</reference>
<reference key="14">
    <citation type="journal article" date="1998" name="Cell">
        <title>Hsp104, Hsp70, and Hsp40: a novel chaperone system that rescues previously aggregated proteins.</title>
        <authorList>
            <person name="Glover J.R."/>
            <person name="Lindquist S.L."/>
        </authorList>
    </citation>
    <scope>FUNCTION</scope>
    <scope>INTERACTION WITH YDJ1</scope>
</reference>
<reference key="15">
    <citation type="journal article" date="1998" name="J. Biol. Chem.">
        <title>The ATPase activity of Hsp104, effects of environmental conditions and mutations.</title>
        <authorList>
            <person name="Schirmer E.C."/>
            <person name="Queitsch C."/>
            <person name="Kowal A.S."/>
            <person name="Parsell D.A."/>
            <person name="Lindquist S.L."/>
        </authorList>
    </citation>
    <scope>BIOPHYSICOCHEMICAL PROPERTIES</scope>
    <scope>MUTAGENESIS OF GLY-217; LYS-218; GLY-619 AND LYS-620</scope>
</reference>
<reference key="16">
    <citation type="journal article" date="1998" name="J. Biol. Chem.">
        <authorList>
            <person name="Schirmer E.C."/>
            <person name="Queitsch C."/>
            <person name="Kowal A.S."/>
            <person name="Parsell D.A."/>
            <person name="Lindquist S.L."/>
        </authorList>
    </citation>
    <scope>ERRATUM OF PUBMED:9624144</scope>
</reference>
<reference key="17">
    <citation type="journal article" date="1998" name="Methods Enzymol.">
        <title>Purification and properties of Hsp104 from yeast.</title>
        <authorList>
            <person name="Schirmer E.C."/>
            <person name="Lindquist S.L."/>
        </authorList>
    </citation>
    <scope>FUNCTION</scope>
    <scope>SUBUNIT</scope>
    <scope>BIOPHYSICOCHEMICAL PROPERTIES</scope>
</reference>
<reference key="18">
    <citation type="journal article" date="1999" name="Cell Stress Chaperones">
        <title>Direct evidence for the intracellular localization of Hsp104 in Saccharomyces cerevisiae by immunoelectron microscopy.</title>
        <authorList>
            <person name="Kawai R."/>
            <person name="Fujita K."/>
            <person name="Iwahashi H."/>
            <person name="Komatsu Y."/>
        </authorList>
    </citation>
    <scope>SUBCELLULAR LOCATION</scope>
</reference>
<reference key="19">
    <citation type="journal article" date="2000" name="Mol. Cell">
        <title>Rnq1: an epigenetic modifier of protein function in yeast.</title>
        <authorList>
            <person name="Sondheimer N."/>
            <person name="Lindquist S.L."/>
        </authorList>
    </citation>
    <scope>FUNCTION IN PRION PROPAGATION</scope>
</reference>
<reference key="20">
    <citation type="journal article" date="2000" name="Mol. Cell. Biol.">
        <title>[URE3] prion propagation in Saccharomyces cerevisiae: requirement for chaperone Hsp104 and curing by overexpressed chaperone Ydj1p.</title>
        <authorList>
            <person name="Moriyama H."/>
            <person name="Edskes H.K."/>
            <person name="Wickner R.B."/>
        </authorList>
    </citation>
    <scope>FUNCTION IN PRION PROPAGATION</scope>
</reference>
<reference key="21">
    <citation type="journal article" date="2001" name="Curr. Microbiol.">
        <title>Guanidine hydrochloride inhibits Hsp104 activity in vivo: a possible explanation for its effect in curing yeast prions.</title>
        <authorList>
            <person name="Jung G."/>
            <person name="Masison D.C."/>
        </authorList>
    </citation>
    <scope>FUNCTION IN PRION PROPAGATION</scope>
</reference>
<reference key="22">
    <citation type="journal article" date="2001" name="Mol. Cell. Biol.">
        <title>Hsp104 interacts with Hsp90 cochaperones in respiring yeast.</title>
        <authorList>
            <person name="Abbas-Terki T."/>
            <person name="Donze O."/>
            <person name="Briand P.-A."/>
            <person name="Picard D."/>
        </authorList>
    </citation>
    <scope>INTERACTION WITH CNS1; CPR7 AND STI1</scope>
</reference>
<reference key="23">
    <citation type="journal article" date="2001" name="Mol. Microbiol.">
        <title>The elimination of the yeast [PSI+] prion by guanidine hydrochloride is the result of Hsp104 inactivation.</title>
        <authorList>
            <person name="Ferreira P.C."/>
            <person name="Ness F."/>
            <person name="Edwards S.R."/>
            <person name="Cox B.S."/>
            <person name="Tuite M.F."/>
        </authorList>
    </citation>
    <scope>FUNCTION IN PRION PROPAGATION</scope>
    <scope>MUTAGENESIS OF LYS-218 AND LYS-620</scope>
</reference>
<reference key="24">
    <citation type="journal article" date="2001" name="Proc. Natl. Acad. Sci. U.S.A.">
        <title>Subunit interactions influence the biochemical and biological properties of Hsp104.</title>
        <authorList>
            <person name="Schirmer E.C."/>
            <person name="Ware D.M."/>
            <person name="Queitsch C."/>
            <person name="Kowal A.S."/>
            <person name="Lindquist S.L."/>
        </authorList>
    </citation>
    <scope>BIOPHYSICOCHEMICAL PROPERTIES</scope>
    <scope>SUBUNIT</scope>
    <scope>MUTAGENESIS OF GLY-217; LYS-218; GLY-619; LYS-620 AND THR-621</scope>
</reference>
<reference key="25">
    <citation type="journal article" date="2002" name="EMBO J.">
        <title>Cooperative kinetics of both Hsp104 ATPase domains and interdomain communication revealed by AAA sensor-1 mutants.</title>
        <authorList>
            <person name="Hattendorf D.A."/>
            <person name="Lindquist S.L."/>
        </authorList>
    </citation>
    <scope>BIOPHYSICOCHEMICAL PROPERTIES</scope>
    <scope>MUTAGENESIS OF THR-317 AND ASN-728</scope>
</reference>
<reference key="26">
    <citation type="journal article" date="2002" name="Mol. Cell">
        <title>Defining a pathway of communication from the C-terminal peptide binding domain to the N-terminal ATPase domain in a AAA protein.</title>
        <authorList>
            <person name="Cashikar A.G."/>
            <person name="Schirmer E.C."/>
            <person name="Hattendorf D.A."/>
            <person name="Glover J.R."/>
            <person name="Ramakrishnan M.S."/>
            <person name="Ware D.M."/>
            <person name="Lindquist S.L."/>
        </authorList>
    </citation>
    <scope>SUBSTRATE-BINDING</scope>
    <scope>MUTAGENESIS OF LYS-218; ALA-315; ALA-503 AND ASN-728</scope>
</reference>
<reference key="27">
    <citation type="journal article" date="2002" name="Mol. Cell. Biol.">
        <title>Guanidine hydrochloride inhibits the generation of prion 'seeds' but not prion protein aggregation in yeast.</title>
        <authorList>
            <person name="Ness F."/>
            <person name="Ferreira P.C."/>
            <person name="Cox B.S."/>
            <person name="Tuite M.F."/>
        </authorList>
    </citation>
    <scope>FUNCTION IN PRION PROPAGATION</scope>
    <scope>MUTAGENESIS OF LYS-218 AND LYS-620</scope>
</reference>
<reference key="28">
    <citation type="journal article" date="2002" name="Mol. Microbiol.">
        <title>HSF and Msn2/4p can exclusively or cooperatively activate the yeast HSP104 gene.</title>
        <authorList>
            <person name="Grably M.R."/>
            <person name="Stanhill A."/>
            <person name="Tell O."/>
            <person name="Engelberg D."/>
        </authorList>
    </citation>
    <scope>INDUCTION</scope>
</reference>
<reference key="29">
    <citation type="journal article" date="2002" name="Proc. Natl. Acad. Sci. U.S.A.">
        <title>Analysis of the AAA sensor-2 motif in the C-terminal ATPase domain of Hsp104 with a site-specific fluorescent probe of nucleotide binding.</title>
        <authorList>
            <person name="Hattendorf D.A."/>
            <person name="Lindquist S.L."/>
        </authorList>
    </citation>
    <scope>MUTAGENESIS OF TYR-819 AND ARG-826</scope>
    <scope>ATP-BINDING</scope>
</reference>
<reference key="30">
    <citation type="journal article" date="2002" name="Proc. Natl. Acad. Sci. U.S.A.">
        <title>Amino acid residue 184 of yeast Hsp104 chaperone is critical for prion-curing by guanidine, prion propagation, and thermotolerance.</title>
        <authorList>
            <person name="Jung G."/>
            <person name="Jones G."/>
            <person name="Masison D.C."/>
        </authorList>
    </citation>
    <scope>MUTAGENESIS OF ASP-184</scope>
</reference>
<reference key="31">
    <citation type="journal article" date="2003" name="J. Biol. Chem.">
        <title>Yeast [PSI+] prion aggregates are formed by small Sup35 polymers fragmented by Hsp104.</title>
        <authorList>
            <person name="Kryndushkin D.S."/>
            <person name="Alexandrov I.M."/>
            <person name="Ter-Avanesyan M.D."/>
            <person name="Kushnirov V.V."/>
        </authorList>
    </citation>
    <scope>FUNCTION IN PRION FRAGMENTATION</scope>
</reference>
<reference key="32">
    <citation type="journal article" date="2003" name="Nature">
        <title>Global analysis of protein localization in budding yeast.</title>
        <authorList>
            <person name="Huh W.-K."/>
            <person name="Falvo J.V."/>
            <person name="Gerke L.C."/>
            <person name="Carroll A.S."/>
            <person name="Howson R.W."/>
            <person name="Weissman J.S."/>
            <person name="O'Shea E.K."/>
        </authorList>
    </citation>
    <scope>SUBCELLULAR LOCATION [LARGE SCALE ANALYSIS]</scope>
</reference>
<reference key="33">
    <citation type="journal article" date="2003" name="Nature">
        <title>Global analysis of protein expression in yeast.</title>
        <authorList>
            <person name="Ghaemmaghami S."/>
            <person name="Huh W.-K."/>
            <person name="Bower K."/>
            <person name="Howson R.W."/>
            <person name="Belle A."/>
            <person name="Dephoure N."/>
            <person name="O'Shea E.K."/>
            <person name="Weissman J.S."/>
        </authorList>
    </citation>
    <scope>LEVEL OF PROTEIN EXPRESSION [LARGE SCALE ANALYSIS]</scope>
</reference>
<reference key="34">
    <citation type="journal article" date="2003" name="Proc. Natl. Acad. Sci. U.S.A.">
        <title>A subset of membrane-associated proteins is ubiquitinated in response to mutations in the endoplasmic reticulum degradation machinery.</title>
        <authorList>
            <person name="Hitchcock A.L."/>
            <person name="Auld K."/>
            <person name="Gygi S.P."/>
            <person name="Silver P.A."/>
        </authorList>
    </citation>
    <scope>UBIQUITINATION [LARGE SCALE ANALYSIS] AT LYS-620</scope>
    <scope>IDENTIFICATION BY MASS SPECTROMETRY</scope>
</reference>
<reference key="35">
    <citation type="journal article" date="2004" name="J. Biol. Chem.">
        <title>The prion curing agent guanidinium chloride specifically inhibits ATP hydrolysis by Hsp104.</title>
        <authorList>
            <person name="Grimminger V."/>
            <person name="Richter K."/>
            <person name="Imhof A."/>
            <person name="Buchner J."/>
            <person name="Walter S."/>
        </authorList>
    </citation>
    <scope>ACTIVITY REGULATION</scope>
</reference>
<reference key="36">
    <citation type="journal article" date="2004" name="J. Biol. Chem.">
        <title>Evidence for an unfolding/threading mechanism for protein disaggregation by Saccharomyces cerevisiae Hsp104.</title>
        <authorList>
            <person name="Lum R."/>
            <person name="Tkach J.M."/>
            <person name="Vierling E."/>
            <person name="Glover J.R."/>
        </authorList>
    </citation>
    <scope>FUNCTION</scope>
    <scope>MUTAGENESIS OF TYR-257; GLU-645 AND TYR-662</scope>
    <scope>BIOPHYSICOCHEMICAL PROPERTIES</scope>
</reference>
<reference key="37">
    <citation type="journal article" date="2004" name="Mol. Biol. Cell">
        <title>Dominant gain-of-function mutations in Hsp104p reveal crucial roles for the middle region.</title>
        <authorList>
            <person name="Schirmer E.C."/>
            <person name="Homann O.R."/>
            <person name="Kowal A.S."/>
            <person name="Lindquist S.L."/>
        </authorList>
    </citation>
    <scope>MUTAGENESIS OF GLY-217; THR-499; ALA-503 AND ALA-509</scope>
</reference>
<reference key="38">
    <citation type="journal article" date="2004" name="Mol. Microbiol.">
        <title>Upregulation of the Hsp104 chaperone at physiological temperature during recovery from thermal insult.</title>
        <authorList>
            <person name="Seppae L."/>
            <person name="Haenninen A.-L."/>
            <person name="Makarow M."/>
        </authorList>
    </citation>
    <scope>INDUCTION</scope>
</reference>
<reference key="39">
    <citation type="journal article" date="2004" name="Science">
        <title>Hsp104 catalyzes formation and elimination of self-replicating Sup35 prion conformers.</title>
        <authorList>
            <person name="Shorter J."/>
            <person name="Lindquist S.L."/>
        </authorList>
    </citation>
    <scope>FUNCTION IN PRION PROPAGATION</scope>
</reference>
<reference key="40">
    <citation type="journal article" date="2005" name="J. Biol. Chem.">
        <title>Disassembling protein aggregates in the yeast cytosol. The cooperation of Hsp26 with Ssa1 and Hsp104.</title>
        <authorList>
            <person name="Haslbeck M."/>
            <person name="Miess A."/>
            <person name="Stromer T."/>
            <person name="Walter S."/>
            <person name="Buchner J."/>
        </authorList>
    </citation>
    <scope>FUNCTION</scope>
</reference>
<reference key="41">
    <citation type="journal article" date="2005" name="J. Biol. Chem.">
        <title>A chaperone pathway in protein disaggregation. Hsp26 alters the nature of protein aggregates to facilitate reactivation by Hsp104.</title>
        <authorList>
            <person name="Cashikar A.G."/>
            <person name="Duennwald M."/>
            <person name="Lindquist S.L."/>
        </authorList>
    </citation>
    <scope>FUNCTION</scope>
</reference>
<reference key="42">
    <citation type="journal article" date="2006" name="J. Biol. Chem.">
        <authorList>
            <person name="Cashikar A.G."/>
            <person name="Duennwald M."/>
            <person name="Lindquist S.L."/>
        </authorList>
    </citation>
    <scope>ERRATUM OF PUBMED:15845535</scope>
</reference>
<reference key="43">
    <citation type="journal article" date="2005" name="J. Biol. Chem.">
        <title>Substrate binding to the molecular chaperone Hsp104 and its regulation by nucleotides.</title>
        <authorList>
            <person name="Boesl B."/>
            <person name="Grimminger V."/>
            <person name="Walter S."/>
        </authorList>
    </citation>
    <scope>SUBUNIT</scope>
    <scope>MUTAGENESIS OF LYS-218; GLU-285; LYS-620 AND GLU-687</scope>
</reference>
<reference key="44">
    <citation type="journal article" date="2006" name="ChemBioChem">
        <title>Yeast prion-protein, sup35, fibril formation proceeds by addition and substraction of oligomers.</title>
        <authorList>
            <person name="Narayanan S."/>
            <person name="Walter S."/>
            <person name="Reif B."/>
        </authorList>
    </citation>
    <scope>FUNCTION IN PRION DISASSEMBLY</scope>
</reference>
<reference key="45">
    <citation type="journal article" date="2006" name="Mol. Cell">
        <title>Destruction or potentiation of different prions catalyzed by similar Hsp104 remodeling activities.</title>
        <authorList>
            <person name="Shorter J."/>
            <person name="Lindquist S.L."/>
        </authorList>
    </citation>
    <scope>FUNCTION IN PRION DISASSEMBLY</scope>
</reference>
<reference key="46">
    <citation type="journal article" date="2007" name="Cell">
        <title>Atypical AAA+ subunit packing creates an expanded cavity for disaggregation by the protein-remodeling factor Hsp104.</title>
        <authorList>
            <person name="Wendler P."/>
            <person name="Shorter J."/>
            <person name="Plisson C."/>
            <person name="Cashikar A.G."/>
            <person name="Lindquist S.L."/>
            <person name="Saibil H.R."/>
        </authorList>
    </citation>
    <scope>SUBUNIT</scope>
    <scope>ELECTRON MICROSCOPY</scope>
    <scope>MUTAGENESIS OF ARG-334; ARG-419; ARG-444; ARG-495; ASN-728 AND ARG-765</scope>
</reference>
<reference key="47">
    <citation type="journal article" date="2007" name="J. Mol. Biol.">
        <title>Processing of proteins by the molecular chaperone Hsp104.</title>
        <authorList>
            <person name="Schaupp A."/>
            <person name="Marcinowski M."/>
            <person name="Grimminger V."/>
            <person name="Boesl B."/>
            <person name="Walter S."/>
        </authorList>
    </citation>
    <scope>FUNCTION</scope>
    <scope>MUTAGENESIS OF LYS-218; GLU-285; LYS-620 AND GLU-687</scope>
</reference>
<reference key="48">
    <citation type="journal article" date="2007" name="Mol. Microbiol.">
        <title>Channel mutations in Hsp104 hexamer distinctively affect thermotolerance and prion-specific propagation.</title>
        <authorList>
            <person name="Kurahashi H."/>
            <person name="Nakamura Y."/>
        </authorList>
    </citation>
    <scope>FUNCTION IN PRION PROPAGATION</scope>
    <scope>MUTAGENESIS OF LEU-462; PRO-557 AND ASP-704</scope>
</reference>
<reference key="49">
    <citation type="journal article" date="2007" name="Nat. Struct. Mol. Biol.">
        <title>Asymmetric deceleration of ClpB or Hsp104 ATPase activity unleashes protein-remodeling activity.</title>
        <authorList>
            <person name="Doyle S.M."/>
            <person name="Shorter J."/>
            <person name="Zolkiewski M."/>
            <person name="Hoskins J.R."/>
            <person name="Lindquist S.L."/>
            <person name="Wickner S."/>
        </authorList>
    </citation>
    <scope>FUNCTION</scope>
    <scope>MUTAGENESIS OF LYS-218; THR-317; LYS-620 AND ASN-728</scope>
</reference>
<reference key="50">
    <citation type="journal article" date="2007" name="PLoS Biol.">
        <title>Hsp104-dependent remodeling of prion complexes mediates protein-only inheritance.</title>
        <authorList>
            <person name="Satpute-Krishnan P."/>
            <person name="Langseth S.X."/>
            <person name="Serio T.R."/>
        </authorList>
    </citation>
    <scope>FUNCTION IN PRION PROPAGATION</scope>
</reference>
<reference key="51">
    <citation type="journal article" date="2008" name="Biochemistry">
        <title>The C-terminal extension of Saccharomyces cerevisiae Hsp104 plays a role in oligomer assembly.</title>
        <authorList>
            <person name="Mackay R.G."/>
            <person name="Helsen C.W."/>
            <person name="Tkach J.M."/>
            <person name="Glover J.R."/>
        </authorList>
    </citation>
    <scope>INTERACTION WITH CPR7</scope>
</reference>
<reference key="52">
    <citation type="journal article" date="2008" name="Mol. Cell. Proteomics">
        <title>A multidimensional chromatography technology for in-depth phosphoproteome analysis.</title>
        <authorList>
            <person name="Albuquerque C.P."/>
            <person name="Smolka M.B."/>
            <person name="Payne S.H."/>
            <person name="Bafna V."/>
            <person name="Eng J."/>
            <person name="Zhou H."/>
        </authorList>
    </citation>
    <scope>PHOSPHORYLATION [LARGE SCALE ANALYSIS] AT SER-206; SER-306; THR-499 AND SER-535</scope>
    <scope>IDENTIFICATION BY MASS SPECTROMETRY [LARGE SCALE ANALYSIS]</scope>
</reference>
<reference key="53">
    <citation type="journal article" date="2008" name="Mol. Microbiol.">
        <title>Substrate threading through the central pore of the Hsp104 chaperone as a common mechanism for protein disaggregation and prion propagation.</title>
        <authorList>
            <person name="Tessarz P."/>
            <person name="Mogk A."/>
            <person name="Bukau B."/>
        </authorList>
    </citation>
    <scope>FUNCTION</scope>
</reference>
<reference key="54">
    <citation type="journal article" date="2008" name="Nature">
        <title>Misfolded proteins partition between two distinct quality control compartments.</title>
        <authorList>
            <person name="Kaganovich D."/>
            <person name="Kopito R."/>
            <person name="Frydman J."/>
        </authorList>
    </citation>
    <scope>SUBCELLULAR LOCATION</scope>
</reference>
<reference key="55">
    <citation type="journal article" date="2008" name="Traffic">
        <title>Nucleocytoplasmic trafficking of the molecular chaperone Hsp104 in unstressed and heat-shocked cells.</title>
        <authorList>
            <person name="Tkach J.M."/>
            <person name="Glover J.R."/>
        </authorList>
    </citation>
    <scope>SUBCELLULAR LOCATION</scope>
    <scope>MUTAGENESIS OF LYS-778; LYS-782 AND LYS-789</scope>
</reference>
<reference key="56">
    <citation type="journal article" date="2009" name="Science">
        <title>Global analysis of Cdk1 substrate phosphorylation sites provides insights into evolution.</title>
        <authorList>
            <person name="Holt L.J."/>
            <person name="Tuch B.B."/>
            <person name="Villen J."/>
            <person name="Johnson A.D."/>
            <person name="Gygi S.P."/>
            <person name="Morgan D.O."/>
        </authorList>
    </citation>
    <scope>PHOSPHORYLATION [LARGE SCALE ANALYSIS] AT SER-206</scope>
    <scope>IDENTIFICATION BY MASS SPECTROMETRY [LARGE SCALE ANALYSIS]</scope>
</reference>
<reference key="57">
    <citation type="journal article" date="2012" name="Proc. Natl. Acad. Sci. U.S.A.">
        <title>N-terminal acetylome analyses and functional insights of the N-terminal acetyltransferase NatB.</title>
        <authorList>
            <person name="Van Damme P."/>
            <person name="Lasa M."/>
            <person name="Polevoda B."/>
            <person name="Gazquez C."/>
            <person name="Elosegui-Artola A."/>
            <person name="Kim D.S."/>
            <person name="De Juan-Pardo E."/>
            <person name="Demeyer K."/>
            <person name="Hole K."/>
            <person name="Larrea E."/>
            <person name="Timmerman E."/>
            <person name="Prieto J."/>
            <person name="Arnesen T."/>
            <person name="Sherman F."/>
            <person name="Gevaert K."/>
            <person name="Aldabe R."/>
        </authorList>
    </citation>
    <scope>ACETYLATION [LARGE SCALE ANALYSIS] AT MET-1</scope>
    <scope>IDENTIFICATION BY MASS SPECTROMETRY [LARGE SCALE ANALYSIS]</scope>
</reference>
<reference key="58">
    <citation type="journal article" date="2012" name="Proteomics">
        <title>Sites of ubiquitin attachment in Saccharomyces cerevisiae.</title>
        <authorList>
            <person name="Starita L.M."/>
            <person name="Lo R.S."/>
            <person name="Eng J.K."/>
            <person name="von Haller P.D."/>
            <person name="Fields S."/>
        </authorList>
    </citation>
    <scope>UBIQUITINATION [LARGE SCALE ANALYSIS] AT LYS-442</scope>
    <scope>IDENTIFICATION BY MASS SPECTROMETRY [LARGE SCALE ANALYSIS]</scope>
</reference>
<name>HS104_YEAST</name>